<comment type="function">
    <text evidence="2">Cysteine protease that cleaves specifically after arginine or lysine residues.</text>
</comment>
<comment type="activity regulation">
    <text evidence="2">Activated by Ca(2+).</text>
</comment>
<comment type="subunit">
    <text evidence="1">Monomer.</text>
</comment>
<comment type="developmental stage">
    <text evidence="3">Expressed in female gametocytes and all downstream mosquito stages including the sporozoites inside the oocyst and the salivary gland, but not in asexual blood stages.</text>
</comment>
<comment type="disruption phenotype">
    <text evidence="3">No developmental defects in mice and mosquito hosts (PubMed:17335919). Not required for ookinete apoptosis (PubMed:17335919).</text>
</comment>
<comment type="similarity">
    <text evidence="5">Belongs to the peptidase C14B family.</text>
</comment>
<keyword id="KW-0378">Hydrolase</keyword>
<keyword id="KW-0645">Protease</keyword>
<keyword id="KW-1185">Reference proteome</keyword>
<keyword id="KW-0788">Thiol protease</keyword>
<keyword id="KW-0865">Zymogen</keyword>
<evidence type="ECO:0000250" key="1">
    <source>
        <dbReference type="UniProtKB" id="Q08601"/>
    </source>
</evidence>
<evidence type="ECO:0000250" key="2">
    <source>
        <dbReference type="UniProtKB" id="Q8IDF3"/>
    </source>
</evidence>
<evidence type="ECO:0000269" key="3">
    <source>
    </source>
</evidence>
<evidence type="ECO:0000303" key="4">
    <source>
    </source>
</evidence>
<evidence type="ECO:0000305" key="5"/>
<evidence type="ECO:0000312" key="6">
    <source>
        <dbReference type="EMBL" id="VUC56735.1"/>
    </source>
</evidence>
<evidence type="ECO:0000312" key="7">
    <source>
        <dbReference type="Proteomes" id="UP000074855"/>
    </source>
</evidence>
<organism evidence="7">
    <name type="scientific">Plasmodium berghei (strain Anka)</name>
    <dbReference type="NCBI Taxonomy" id="5823"/>
    <lineage>
        <taxon>Eukaryota</taxon>
        <taxon>Sar</taxon>
        <taxon>Alveolata</taxon>
        <taxon>Apicomplexa</taxon>
        <taxon>Aconoidasida</taxon>
        <taxon>Haemosporida</taxon>
        <taxon>Plasmodiidae</taxon>
        <taxon>Plasmodium</taxon>
        <taxon>Plasmodium (Vinckeia)</taxon>
    </lineage>
</organism>
<protein>
    <recommendedName>
        <fullName evidence="4">Metacaspase-1</fullName>
        <ecNumber evidence="2">3.4.22.-</ecNumber>
    </recommendedName>
    <alternativeName>
        <fullName evidence="4">PfMC1</fullName>
    </alternativeName>
    <component>
        <recommendedName>
            <fullName evidence="1">Large subunit p20</fullName>
        </recommendedName>
    </component>
    <component>
        <recommendedName>
            <fullName evidence="1">Small subunit p10</fullName>
        </recommendedName>
    </component>
</protein>
<sequence length="595" mass="69604">MSLQMDKIYVKVHELKFVNNLERNSHYVKIYWDDKKYKSQTKDGGCYIFNETFLIPITNIYDQKDQIIYVEIWESNLLNKQCAYTFFTLNSIKIGQIIKENITFIEVLKKCTLGLSINIVRNQKDILFFNIKELLPTFQDQEIINAVWKNEDEASIIKQLINLNTIDGITNIGNYKNSQNYNETLQKPKENISIYKSGEEIENSYIPSSTPEYVSHYIYKGAGENSSNYINKTKDTLFPTYLNNYAYNNNIKNVYDTPNGAHYSSNNNSGSNNAYSNFDHNINNSPKNNVPFSNSDNDKIFHYSRNYMPSPNSEKMLYFSCGNKKKALLIGIDYCGTQNELKGSINDAIITNELLIKKYNFYDSSMNILKLIDNQTNPNYRPTKRNILSALEWLVQDNNPGDIFFFFYSGHSYKKYDYTCIEKGGYNQTIVPCDFKTEGEIIDNDLHKYLIQPLKDGVKLVSFIDCPNSEGILNLGYKYKLKKEKWKETYNPFHVLADVTQFSYSKINEFPTEINLLEHVLITNNIEALTYHYMIQSIHSYINLYNKKKKKKIFLMSSQKFNIDRKFDFNHILKNSNSELGQQKNIIKWKKNKKK</sequence>
<accession>A0A509APC7</accession>
<reference evidence="7" key="1">
    <citation type="journal article" date="2014" name="BMC Biol.">
        <title>A comprehensive evaluation of rodent malaria parasite genomes and gene expression.</title>
        <authorList>
            <person name="Otto T.D."/>
            <person name="Bohme U."/>
            <person name="Jackson A.P."/>
            <person name="Hunt M."/>
            <person name="Franke-Fayard B."/>
            <person name="Hoeijmakers W.A."/>
            <person name="Religa A.A."/>
            <person name="Robertson L."/>
            <person name="Sanders M."/>
            <person name="Ogun S.A."/>
            <person name="Cunningham D."/>
            <person name="Erhart A."/>
            <person name="Billker O."/>
            <person name="Khan S.M."/>
            <person name="Stunnenberg H.G."/>
            <person name="Langhorne J."/>
            <person name="Holder A.A."/>
            <person name="Waters A.P."/>
            <person name="Newbold C.I."/>
            <person name="Pain A."/>
            <person name="Berriman M."/>
            <person name="Janse C.J."/>
        </authorList>
    </citation>
    <scope>NUCLEOTIDE SEQUENCE [LARGE SCALE GENOMIC DNA]</scope>
    <source>
        <strain evidence="7">ANKA</strain>
    </source>
</reference>
<reference evidence="5" key="2">
    <citation type="journal article" date="2007" name="Mol. Biochem. Parasitol.">
        <title>The role of metacaspase 1 in Plasmodium berghei development and apoptosis.</title>
        <authorList>
            <person name="Le Chat L."/>
            <person name="Sinden R.E."/>
            <person name="Dessens J.T."/>
        </authorList>
    </citation>
    <scope>DEVELOPMENTAL STAGE</scope>
    <scope>DISRUPTION PHENOTYPE</scope>
</reference>
<proteinExistence type="evidence at transcript level"/>
<name>MCA1_PLABA</name>
<feature type="propeptide" id="PRO_0000451184" evidence="5">
    <location>
        <begin position="1"/>
        <end status="unknown"/>
    </location>
</feature>
<feature type="chain" id="PRO_0000451186" description="Large subunit p20" evidence="5">
    <location>
        <begin status="unknown"/>
        <end position="480"/>
    </location>
</feature>
<feature type="chain" id="PRO_0000451187" description="Small subunit p10" evidence="5">
    <location>
        <begin position="481"/>
        <end position="595"/>
    </location>
</feature>
<feature type="chain" id="PRO_0000451185" description="Metacaspase-1">
    <location>
        <begin status="unknown"/>
        <end position="595"/>
    </location>
</feature>
<feature type="active site" evidence="1">
    <location>
        <position position="411"/>
    </location>
</feature>
<feature type="active site" evidence="1">
    <location>
        <position position="466"/>
    </location>
</feature>
<gene>
    <name evidence="2" type="primary">MCA1</name>
    <name evidence="6" type="ORF">PBANKA_1131400</name>
</gene>
<dbReference type="EC" id="3.4.22.-" evidence="2"/>
<dbReference type="EMBL" id="LK023126">
    <property type="protein sequence ID" value="VUC56735.1"/>
    <property type="molecule type" value="Genomic_DNA"/>
</dbReference>
<dbReference type="SMR" id="A0A509APC7"/>
<dbReference type="FunCoup" id="A0A509APC7">
    <property type="interactions" value="313"/>
</dbReference>
<dbReference type="VEuPathDB" id="PlasmoDB:PBANKA_1131400"/>
<dbReference type="InParanoid" id="A0A509APC7"/>
<dbReference type="OMA" id="VYWKNKK"/>
<dbReference type="Proteomes" id="UP000074855">
    <property type="component" value="Chromosome 11"/>
</dbReference>
<dbReference type="GO" id="GO:0005737">
    <property type="term" value="C:cytoplasm"/>
    <property type="evidence" value="ECO:0007669"/>
    <property type="project" value="TreeGrafter"/>
</dbReference>
<dbReference type="GO" id="GO:0004197">
    <property type="term" value="F:cysteine-type endopeptidase activity"/>
    <property type="evidence" value="ECO:0007669"/>
    <property type="project" value="InterPro"/>
</dbReference>
<dbReference type="GO" id="GO:0006508">
    <property type="term" value="P:proteolysis"/>
    <property type="evidence" value="ECO:0007669"/>
    <property type="project" value="UniProtKB-KW"/>
</dbReference>
<dbReference type="CDD" id="cd00030">
    <property type="entry name" value="C2"/>
    <property type="match status" value="1"/>
</dbReference>
<dbReference type="Gene3D" id="3.40.50.12660">
    <property type="match status" value="1"/>
</dbReference>
<dbReference type="InterPro" id="IPR000008">
    <property type="entry name" value="C2_dom"/>
</dbReference>
<dbReference type="InterPro" id="IPR035892">
    <property type="entry name" value="C2_domain_sf"/>
</dbReference>
<dbReference type="InterPro" id="IPR050452">
    <property type="entry name" value="Metacaspase"/>
</dbReference>
<dbReference type="InterPro" id="IPR011600">
    <property type="entry name" value="Pept_C14_caspase"/>
</dbReference>
<dbReference type="PANTHER" id="PTHR48104:SF30">
    <property type="entry name" value="METACASPASE-1"/>
    <property type="match status" value="1"/>
</dbReference>
<dbReference type="PANTHER" id="PTHR48104">
    <property type="entry name" value="METACASPASE-4"/>
    <property type="match status" value="1"/>
</dbReference>
<dbReference type="Pfam" id="PF00168">
    <property type="entry name" value="C2"/>
    <property type="match status" value="1"/>
</dbReference>
<dbReference type="Pfam" id="PF00656">
    <property type="entry name" value="Peptidase_C14"/>
    <property type="match status" value="1"/>
</dbReference>
<dbReference type="SUPFAM" id="SSF49562">
    <property type="entry name" value="C2 domain (Calcium/lipid-binding domain, CaLB)"/>
    <property type="match status" value="1"/>
</dbReference>